<gene>
    <name evidence="1" type="primary">hfq</name>
    <name type="ordered locus">BURPS668_2184</name>
</gene>
<feature type="chain" id="PRO_1000025898" description="RNA-binding protein Hfq">
    <location>
        <begin position="1"/>
        <end position="79"/>
    </location>
</feature>
<feature type="domain" description="Sm" evidence="2">
    <location>
        <begin position="10"/>
        <end position="69"/>
    </location>
</feature>
<keyword id="KW-0694">RNA-binding</keyword>
<keyword id="KW-0346">Stress response</keyword>
<sequence length="79" mass="8833">MSNKGQLLQDPFLNALRKEHVPVSIYLVNGIKLQGNIESFDQYVVLLRNTVTQMVYKHAISTVVPARPVNFHPDAEAAS</sequence>
<evidence type="ECO:0000255" key="1">
    <source>
        <dbReference type="HAMAP-Rule" id="MF_00436"/>
    </source>
</evidence>
<evidence type="ECO:0000255" key="2">
    <source>
        <dbReference type="PROSITE-ProRule" id="PRU01346"/>
    </source>
</evidence>
<protein>
    <recommendedName>
        <fullName evidence="1">RNA-binding protein Hfq</fullName>
    </recommendedName>
</protein>
<reference key="1">
    <citation type="journal article" date="2010" name="Genome Biol. Evol.">
        <title>Continuing evolution of Burkholderia mallei through genome reduction and large-scale rearrangements.</title>
        <authorList>
            <person name="Losada L."/>
            <person name="Ronning C.M."/>
            <person name="DeShazer D."/>
            <person name="Woods D."/>
            <person name="Fedorova N."/>
            <person name="Kim H.S."/>
            <person name="Shabalina S.A."/>
            <person name="Pearson T.R."/>
            <person name="Brinkac L."/>
            <person name="Tan P."/>
            <person name="Nandi T."/>
            <person name="Crabtree J."/>
            <person name="Badger J."/>
            <person name="Beckstrom-Sternberg S."/>
            <person name="Saqib M."/>
            <person name="Schutzer S.E."/>
            <person name="Keim P."/>
            <person name="Nierman W.C."/>
        </authorList>
    </citation>
    <scope>NUCLEOTIDE SEQUENCE [LARGE SCALE GENOMIC DNA]</scope>
    <source>
        <strain>668</strain>
    </source>
</reference>
<proteinExistence type="inferred from homology"/>
<comment type="function">
    <text evidence="1">RNA chaperone that binds small regulatory RNA (sRNAs) and mRNAs to facilitate mRNA translational regulation in response to envelope stress, environmental stress and changes in metabolite concentrations. Also binds with high specificity to tRNAs.</text>
</comment>
<comment type="subunit">
    <text evidence="1">Homohexamer.</text>
</comment>
<comment type="similarity">
    <text evidence="1">Belongs to the Hfq family.</text>
</comment>
<dbReference type="EMBL" id="CP000570">
    <property type="protein sequence ID" value="ABN81828.1"/>
    <property type="molecule type" value="Genomic_DNA"/>
</dbReference>
<dbReference type="RefSeq" id="WP_004192796.1">
    <property type="nucleotide sequence ID" value="NC_009074.1"/>
</dbReference>
<dbReference type="SMR" id="A3NA48"/>
<dbReference type="GeneID" id="93060471"/>
<dbReference type="KEGG" id="bpd:BURPS668_2184"/>
<dbReference type="HOGENOM" id="CLU_113688_2_2_4"/>
<dbReference type="GO" id="GO:0005829">
    <property type="term" value="C:cytosol"/>
    <property type="evidence" value="ECO:0007669"/>
    <property type="project" value="TreeGrafter"/>
</dbReference>
<dbReference type="GO" id="GO:0003723">
    <property type="term" value="F:RNA binding"/>
    <property type="evidence" value="ECO:0007669"/>
    <property type="project" value="UniProtKB-UniRule"/>
</dbReference>
<dbReference type="GO" id="GO:0006355">
    <property type="term" value="P:regulation of DNA-templated transcription"/>
    <property type="evidence" value="ECO:0007669"/>
    <property type="project" value="InterPro"/>
</dbReference>
<dbReference type="GO" id="GO:0043487">
    <property type="term" value="P:regulation of RNA stability"/>
    <property type="evidence" value="ECO:0007669"/>
    <property type="project" value="TreeGrafter"/>
</dbReference>
<dbReference type="GO" id="GO:0045974">
    <property type="term" value="P:regulation of translation, ncRNA-mediated"/>
    <property type="evidence" value="ECO:0007669"/>
    <property type="project" value="TreeGrafter"/>
</dbReference>
<dbReference type="CDD" id="cd01716">
    <property type="entry name" value="Hfq"/>
    <property type="match status" value="1"/>
</dbReference>
<dbReference type="FunFam" id="2.30.30.100:FF:000001">
    <property type="entry name" value="RNA-binding protein Hfq"/>
    <property type="match status" value="1"/>
</dbReference>
<dbReference type="Gene3D" id="2.30.30.100">
    <property type="match status" value="1"/>
</dbReference>
<dbReference type="HAMAP" id="MF_00436">
    <property type="entry name" value="Hfq"/>
    <property type="match status" value="1"/>
</dbReference>
<dbReference type="InterPro" id="IPR005001">
    <property type="entry name" value="Hfq"/>
</dbReference>
<dbReference type="InterPro" id="IPR010920">
    <property type="entry name" value="LSM_dom_sf"/>
</dbReference>
<dbReference type="InterPro" id="IPR047575">
    <property type="entry name" value="Sm"/>
</dbReference>
<dbReference type="NCBIfam" id="TIGR02383">
    <property type="entry name" value="Hfq"/>
    <property type="match status" value="1"/>
</dbReference>
<dbReference type="NCBIfam" id="NF001602">
    <property type="entry name" value="PRK00395.1"/>
    <property type="match status" value="1"/>
</dbReference>
<dbReference type="PANTHER" id="PTHR34772">
    <property type="entry name" value="RNA-BINDING PROTEIN HFQ"/>
    <property type="match status" value="1"/>
</dbReference>
<dbReference type="PANTHER" id="PTHR34772:SF1">
    <property type="entry name" value="RNA-BINDING PROTEIN HFQ"/>
    <property type="match status" value="1"/>
</dbReference>
<dbReference type="Pfam" id="PF17209">
    <property type="entry name" value="Hfq"/>
    <property type="match status" value="1"/>
</dbReference>
<dbReference type="SUPFAM" id="SSF50182">
    <property type="entry name" value="Sm-like ribonucleoproteins"/>
    <property type="match status" value="1"/>
</dbReference>
<dbReference type="PROSITE" id="PS52002">
    <property type="entry name" value="SM"/>
    <property type="match status" value="1"/>
</dbReference>
<name>HFQ_BURP6</name>
<organism>
    <name type="scientific">Burkholderia pseudomallei (strain 668)</name>
    <dbReference type="NCBI Taxonomy" id="320373"/>
    <lineage>
        <taxon>Bacteria</taxon>
        <taxon>Pseudomonadati</taxon>
        <taxon>Pseudomonadota</taxon>
        <taxon>Betaproteobacteria</taxon>
        <taxon>Burkholderiales</taxon>
        <taxon>Burkholderiaceae</taxon>
        <taxon>Burkholderia</taxon>
        <taxon>pseudomallei group</taxon>
    </lineage>
</organism>
<accession>A3NA48</accession>